<accession>Q02K26</accession>
<reference key="1">
    <citation type="journal article" date="2006" name="Genome Biol.">
        <title>Genomic analysis reveals that Pseudomonas aeruginosa virulence is combinatorial.</title>
        <authorList>
            <person name="Lee D.G."/>
            <person name="Urbach J.M."/>
            <person name="Wu G."/>
            <person name="Liberati N.T."/>
            <person name="Feinbaum R.L."/>
            <person name="Miyata S."/>
            <person name="Diggins L.T."/>
            <person name="He J."/>
            <person name="Saucier M."/>
            <person name="Deziel E."/>
            <person name="Friedman L."/>
            <person name="Li L."/>
            <person name="Grills G."/>
            <person name="Montgomery K."/>
            <person name="Kucherlapati R."/>
            <person name="Rahme L.G."/>
            <person name="Ausubel F.M."/>
        </authorList>
    </citation>
    <scope>NUCLEOTIDE SEQUENCE [LARGE SCALE GENOMIC DNA]</scope>
    <source>
        <strain>UCBPP-PA14</strain>
    </source>
</reference>
<name>APT_PSEAB</name>
<organism>
    <name type="scientific">Pseudomonas aeruginosa (strain UCBPP-PA14)</name>
    <dbReference type="NCBI Taxonomy" id="208963"/>
    <lineage>
        <taxon>Bacteria</taxon>
        <taxon>Pseudomonadati</taxon>
        <taxon>Pseudomonadota</taxon>
        <taxon>Gammaproteobacteria</taxon>
        <taxon>Pseudomonadales</taxon>
        <taxon>Pseudomonadaceae</taxon>
        <taxon>Pseudomonas</taxon>
    </lineage>
</organism>
<gene>
    <name evidence="1" type="primary">apt</name>
    <name type="ordered locus">PA14_44500</name>
</gene>
<proteinExistence type="inferred from homology"/>
<feature type="chain" id="PRO_1000000324" description="Adenine phosphoribosyltransferase">
    <location>
        <begin position="1"/>
        <end position="182"/>
    </location>
</feature>
<sequence length="182" mass="19805">MIFDEFTLKSQIRAVPDFPKPGVVFRDITPLFQSPRALRMTVDSFVQRYIEADFSHIGAMDARGFLIGSAVAYALNKPLVLFRKQGKLPADVLAEGYQTEYGEAFLEVHADSLCEGDSVLIFDDLIATGGTLLAAASLVRRLGARVFEAAAIIDLPELGGSTRLQDAGISTFSLTAFALDER</sequence>
<dbReference type="EC" id="2.4.2.7" evidence="1"/>
<dbReference type="EMBL" id="CP000438">
    <property type="protein sequence ID" value="ABJ10723.1"/>
    <property type="molecule type" value="Genomic_DNA"/>
</dbReference>
<dbReference type="RefSeq" id="WP_003087259.1">
    <property type="nucleotide sequence ID" value="NZ_CP034244.1"/>
</dbReference>
<dbReference type="SMR" id="Q02K26"/>
<dbReference type="KEGG" id="pau:PA14_44500"/>
<dbReference type="PseudoCAP" id="PA14_44500"/>
<dbReference type="HOGENOM" id="CLU_063339_3_0_6"/>
<dbReference type="BioCyc" id="PAER208963:G1G74-3736-MONOMER"/>
<dbReference type="UniPathway" id="UPA00588">
    <property type="reaction ID" value="UER00646"/>
</dbReference>
<dbReference type="Proteomes" id="UP000000653">
    <property type="component" value="Chromosome"/>
</dbReference>
<dbReference type="GO" id="GO:0005829">
    <property type="term" value="C:cytosol"/>
    <property type="evidence" value="ECO:0007669"/>
    <property type="project" value="TreeGrafter"/>
</dbReference>
<dbReference type="GO" id="GO:0003999">
    <property type="term" value="F:adenine phosphoribosyltransferase activity"/>
    <property type="evidence" value="ECO:0007669"/>
    <property type="project" value="UniProtKB-UniRule"/>
</dbReference>
<dbReference type="GO" id="GO:0006168">
    <property type="term" value="P:adenine salvage"/>
    <property type="evidence" value="ECO:0007669"/>
    <property type="project" value="InterPro"/>
</dbReference>
<dbReference type="GO" id="GO:0044209">
    <property type="term" value="P:AMP salvage"/>
    <property type="evidence" value="ECO:0007669"/>
    <property type="project" value="UniProtKB-UniRule"/>
</dbReference>
<dbReference type="GO" id="GO:0006166">
    <property type="term" value="P:purine ribonucleoside salvage"/>
    <property type="evidence" value="ECO:0007669"/>
    <property type="project" value="UniProtKB-KW"/>
</dbReference>
<dbReference type="CDD" id="cd06223">
    <property type="entry name" value="PRTases_typeI"/>
    <property type="match status" value="1"/>
</dbReference>
<dbReference type="FunFam" id="3.40.50.2020:FF:000021">
    <property type="entry name" value="Adenine phosphoribosyltransferase"/>
    <property type="match status" value="1"/>
</dbReference>
<dbReference type="Gene3D" id="3.40.50.2020">
    <property type="match status" value="1"/>
</dbReference>
<dbReference type="HAMAP" id="MF_00004">
    <property type="entry name" value="Aden_phosphoribosyltr"/>
    <property type="match status" value="1"/>
</dbReference>
<dbReference type="InterPro" id="IPR005764">
    <property type="entry name" value="Ade_phspho_trans"/>
</dbReference>
<dbReference type="InterPro" id="IPR050120">
    <property type="entry name" value="Adenine_PRTase"/>
</dbReference>
<dbReference type="InterPro" id="IPR000836">
    <property type="entry name" value="PRibTrfase_dom"/>
</dbReference>
<dbReference type="InterPro" id="IPR029057">
    <property type="entry name" value="PRTase-like"/>
</dbReference>
<dbReference type="NCBIfam" id="TIGR01090">
    <property type="entry name" value="apt"/>
    <property type="match status" value="1"/>
</dbReference>
<dbReference type="NCBIfam" id="NF002634">
    <property type="entry name" value="PRK02304.1-3"/>
    <property type="match status" value="1"/>
</dbReference>
<dbReference type="NCBIfam" id="NF002636">
    <property type="entry name" value="PRK02304.1-5"/>
    <property type="match status" value="1"/>
</dbReference>
<dbReference type="PANTHER" id="PTHR11776">
    <property type="entry name" value="ADENINE PHOSPHORIBOSYLTRANSFERASE"/>
    <property type="match status" value="1"/>
</dbReference>
<dbReference type="PANTHER" id="PTHR11776:SF7">
    <property type="entry name" value="PHOSPHORIBOSYLTRANSFERASE DOMAIN-CONTAINING PROTEIN"/>
    <property type="match status" value="1"/>
</dbReference>
<dbReference type="Pfam" id="PF00156">
    <property type="entry name" value="Pribosyltran"/>
    <property type="match status" value="1"/>
</dbReference>
<dbReference type="SUPFAM" id="SSF53271">
    <property type="entry name" value="PRTase-like"/>
    <property type="match status" value="1"/>
</dbReference>
<dbReference type="PROSITE" id="PS00103">
    <property type="entry name" value="PUR_PYR_PR_TRANSFER"/>
    <property type="match status" value="1"/>
</dbReference>
<keyword id="KW-0963">Cytoplasm</keyword>
<keyword id="KW-0328">Glycosyltransferase</keyword>
<keyword id="KW-0660">Purine salvage</keyword>
<keyword id="KW-0808">Transferase</keyword>
<comment type="function">
    <text evidence="1">Catalyzes a salvage reaction resulting in the formation of AMP, that is energically less costly than de novo synthesis.</text>
</comment>
<comment type="catalytic activity">
    <reaction evidence="1">
        <text>AMP + diphosphate = 5-phospho-alpha-D-ribose 1-diphosphate + adenine</text>
        <dbReference type="Rhea" id="RHEA:16609"/>
        <dbReference type="ChEBI" id="CHEBI:16708"/>
        <dbReference type="ChEBI" id="CHEBI:33019"/>
        <dbReference type="ChEBI" id="CHEBI:58017"/>
        <dbReference type="ChEBI" id="CHEBI:456215"/>
        <dbReference type="EC" id="2.4.2.7"/>
    </reaction>
</comment>
<comment type="pathway">
    <text evidence="1">Purine metabolism; AMP biosynthesis via salvage pathway; AMP from adenine: step 1/1.</text>
</comment>
<comment type="subunit">
    <text evidence="1">Homodimer.</text>
</comment>
<comment type="subcellular location">
    <subcellularLocation>
        <location evidence="1">Cytoplasm</location>
    </subcellularLocation>
</comment>
<comment type="similarity">
    <text evidence="1">Belongs to the purine/pyrimidine phosphoribosyltransferase family.</text>
</comment>
<protein>
    <recommendedName>
        <fullName evidence="1">Adenine phosphoribosyltransferase</fullName>
        <shortName evidence="1">APRT</shortName>
        <ecNumber evidence="1">2.4.2.7</ecNumber>
    </recommendedName>
</protein>
<evidence type="ECO:0000255" key="1">
    <source>
        <dbReference type="HAMAP-Rule" id="MF_00004"/>
    </source>
</evidence>